<evidence type="ECO:0000255" key="1">
    <source>
        <dbReference type="HAMAP-Rule" id="MF_00667"/>
    </source>
</evidence>
<dbReference type="EMBL" id="CP000560">
    <property type="protein sequence ID" value="ABS73219.1"/>
    <property type="molecule type" value="Genomic_DNA"/>
</dbReference>
<dbReference type="RefSeq" id="WP_003155535.1">
    <property type="nucleotide sequence ID" value="NC_009725.2"/>
</dbReference>
<dbReference type="SMR" id="A7Z2J3"/>
<dbReference type="GeneID" id="93079968"/>
<dbReference type="KEGG" id="bay:RBAM_008350"/>
<dbReference type="HOGENOM" id="CLU_191960_2_1_9"/>
<dbReference type="Proteomes" id="UP000001120">
    <property type="component" value="Chromosome"/>
</dbReference>
<dbReference type="GO" id="GO:0042601">
    <property type="term" value="C:endospore-forming forespore"/>
    <property type="evidence" value="ECO:0007669"/>
    <property type="project" value="InterPro"/>
</dbReference>
<dbReference type="GO" id="GO:0030436">
    <property type="term" value="P:asexual sporulation"/>
    <property type="evidence" value="ECO:0007669"/>
    <property type="project" value="UniProtKB-UniRule"/>
</dbReference>
<dbReference type="GO" id="GO:0030435">
    <property type="term" value="P:sporulation resulting in formation of a cellular spore"/>
    <property type="evidence" value="ECO:0007669"/>
    <property type="project" value="UniProtKB-KW"/>
</dbReference>
<dbReference type="HAMAP" id="MF_00667">
    <property type="entry name" value="SspH"/>
    <property type="match status" value="1"/>
</dbReference>
<dbReference type="InterPro" id="IPR012610">
    <property type="entry name" value="SASP_SspH"/>
</dbReference>
<dbReference type="NCBIfam" id="TIGR02861">
    <property type="entry name" value="SASP_H"/>
    <property type="match status" value="1"/>
</dbReference>
<dbReference type="Pfam" id="PF08141">
    <property type="entry name" value="SspH"/>
    <property type="match status" value="1"/>
</dbReference>
<feature type="chain" id="PRO_1000044694" description="Small, acid-soluble spore protein H">
    <location>
        <begin position="1"/>
        <end position="60"/>
    </location>
</feature>
<organism>
    <name type="scientific">Bacillus velezensis (strain DSM 23117 / BGSC 10A6 / LMG 26770 / FZB42)</name>
    <name type="common">Bacillus amyloliquefaciens subsp. plantarum</name>
    <dbReference type="NCBI Taxonomy" id="326423"/>
    <lineage>
        <taxon>Bacteria</taxon>
        <taxon>Bacillati</taxon>
        <taxon>Bacillota</taxon>
        <taxon>Bacilli</taxon>
        <taxon>Bacillales</taxon>
        <taxon>Bacillaceae</taxon>
        <taxon>Bacillus</taxon>
        <taxon>Bacillus amyloliquefaciens group</taxon>
    </lineage>
</organism>
<reference key="1">
    <citation type="journal article" date="2007" name="Nat. Biotechnol.">
        <title>Comparative analysis of the complete genome sequence of the plant growth-promoting bacterium Bacillus amyloliquefaciens FZB42.</title>
        <authorList>
            <person name="Chen X.H."/>
            <person name="Koumoutsi A."/>
            <person name="Scholz R."/>
            <person name="Eisenreich A."/>
            <person name="Schneider K."/>
            <person name="Heinemeyer I."/>
            <person name="Morgenstern B."/>
            <person name="Voss B."/>
            <person name="Hess W.R."/>
            <person name="Reva O."/>
            <person name="Junge H."/>
            <person name="Voigt B."/>
            <person name="Jungblut P.R."/>
            <person name="Vater J."/>
            <person name="Suessmuth R."/>
            <person name="Liesegang H."/>
            <person name="Strittmatter A."/>
            <person name="Gottschalk G."/>
            <person name="Borriss R."/>
        </authorList>
    </citation>
    <scope>NUCLEOTIDE SEQUENCE [LARGE SCALE GENOMIC DNA]</scope>
    <source>
        <strain>DSM 23117 / BGSC 10A6 / LMG 26770 / FZB42</strain>
    </source>
</reference>
<keyword id="KW-0749">Sporulation</keyword>
<accession>A7Z2J3</accession>
<comment type="subcellular location">
    <subcellularLocation>
        <location evidence="1">Spore core</location>
    </subcellularLocation>
</comment>
<comment type="induction">
    <text evidence="1">Expressed only in the forespore compartment of sporulating cells.</text>
</comment>
<comment type="similarity">
    <text evidence="1">Belongs to the SspH family.</text>
</comment>
<name>SSPH_BACVZ</name>
<gene>
    <name evidence="1" type="primary">sspH</name>
    <name type="ordered locus">RBAM_008350</name>
</gene>
<proteinExistence type="inferred from homology"/>
<protein>
    <recommendedName>
        <fullName evidence="1">Small, acid-soluble spore protein H</fullName>
        <shortName evidence="1">SASP H</shortName>
    </recommendedName>
</protein>
<sequence length="60" mass="6914">MNTQRAKDISESAAMAYVTYEGVPIYIQHVNEDKETARIFPIGNPQFEQEVLLSDLQEHF</sequence>